<reference key="1">
    <citation type="journal article" date="2008" name="BMC Genomics">
        <title>Genome sequence and rapid evolution of the rice pathogen Xanthomonas oryzae pv. oryzae PXO99A.</title>
        <authorList>
            <person name="Salzberg S.L."/>
            <person name="Sommer D.D."/>
            <person name="Schatz M.C."/>
            <person name="Phillippy A.M."/>
            <person name="Rabinowicz P.D."/>
            <person name="Tsuge S."/>
            <person name="Furutani A."/>
            <person name="Ochiai H."/>
            <person name="Delcher A.L."/>
            <person name="Kelley D."/>
            <person name="Madupu R."/>
            <person name="Puiu D."/>
            <person name="Radune D."/>
            <person name="Shumway M."/>
            <person name="Trapnell C."/>
            <person name="Aparna G."/>
            <person name="Jha G."/>
            <person name="Pandey A."/>
            <person name="Patil P.B."/>
            <person name="Ishihara H."/>
            <person name="Meyer D.F."/>
            <person name="Szurek B."/>
            <person name="Verdier V."/>
            <person name="Koebnik R."/>
            <person name="Dow J.M."/>
            <person name="Ryan R.P."/>
            <person name="Hirata H."/>
            <person name="Tsuyumu S."/>
            <person name="Won Lee S."/>
            <person name="Seo Y.-S."/>
            <person name="Sriariyanum M."/>
            <person name="Ronald P.C."/>
            <person name="Sonti R.V."/>
            <person name="Van Sluys M.-A."/>
            <person name="Leach J.E."/>
            <person name="White F.F."/>
            <person name="Bogdanove A.J."/>
        </authorList>
    </citation>
    <scope>NUCLEOTIDE SEQUENCE [LARGE SCALE GENOMIC DNA]</scope>
    <source>
        <strain>PXO99A</strain>
    </source>
</reference>
<comment type="function">
    <text evidence="1">DNA-dependent RNA polymerase catalyzes the transcription of DNA into RNA using the four ribonucleoside triphosphates as substrates.</text>
</comment>
<comment type="catalytic activity">
    <reaction evidence="1">
        <text>RNA(n) + a ribonucleoside 5'-triphosphate = RNA(n+1) + diphosphate</text>
        <dbReference type="Rhea" id="RHEA:21248"/>
        <dbReference type="Rhea" id="RHEA-COMP:14527"/>
        <dbReference type="Rhea" id="RHEA-COMP:17342"/>
        <dbReference type="ChEBI" id="CHEBI:33019"/>
        <dbReference type="ChEBI" id="CHEBI:61557"/>
        <dbReference type="ChEBI" id="CHEBI:140395"/>
        <dbReference type="EC" id="2.7.7.6"/>
    </reaction>
</comment>
<comment type="subunit">
    <text evidence="1">The RNAP catalytic core consists of 2 alpha, 1 beta, 1 beta' and 1 omega subunit. When a sigma factor is associated with the core the holoenzyme is formed, which can initiate transcription.</text>
</comment>
<comment type="similarity">
    <text evidence="1">Belongs to the RNA polymerase beta chain family.</text>
</comment>
<protein>
    <recommendedName>
        <fullName evidence="1">DNA-directed RNA polymerase subunit beta</fullName>
        <shortName evidence="1">RNAP subunit beta</shortName>
        <ecNumber evidence="1">2.7.7.6</ecNumber>
    </recommendedName>
    <alternativeName>
        <fullName evidence="1">RNA polymerase subunit beta</fullName>
    </alternativeName>
    <alternativeName>
        <fullName evidence="1">Transcriptase subunit beta</fullName>
    </alternativeName>
</protein>
<name>RPOB_XANOP</name>
<accession>B2SQQ1</accession>
<keyword id="KW-0002">3D-structure</keyword>
<keyword id="KW-0240">DNA-directed RNA polymerase</keyword>
<keyword id="KW-0548">Nucleotidyltransferase</keyword>
<keyword id="KW-0804">Transcription</keyword>
<keyword id="KW-0808">Transferase</keyword>
<evidence type="ECO:0000255" key="1">
    <source>
        <dbReference type="HAMAP-Rule" id="MF_01321"/>
    </source>
</evidence>
<evidence type="ECO:0007829" key="2">
    <source>
        <dbReference type="PDB" id="6J9E"/>
    </source>
</evidence>
<dbReference type="EC" id="2.7.7.6" evidence="1"/>
<dbReference type="EMBL" id="CP000967">
    <property type="protein sequence ID" value="ACD57878.1"/>
    <property type="molecule type" value="Genomic_DNA"/>
</dbReference>
<dbReference type="RefSeq" id="WP_011260034.1">
    <property type="nucleotide sequence ID" value="NC_010717.2"/>
</dbReference>
<dbReference type="PDB" id="6J9E">
    <property type="method" value="EM"/>
    <property type="resolution" value="3.41 A"/>
    <property type="chains" value="C=1-1383"/>
</dbReference>
<dbReference type="PDBsum" id="6J9E"/>
<dbReference type="EMDB" id="EMD-9785"/>
<dbReference type="SMR" id="B2SQQ1"/>
<dbReference type="KEGG" id="xop:PXO_04530"/>
<dbReference type="eggNOG" id="COG0085">
    <property type="taxonomic scope" value="Bacteria"/>
</dbReference>
<dbReference type="HOGENOM" id="CLU_000524_4_3_6"/>
<dbReference type="Proteomes" id="UP000001740">
    <property type="component" value="Chromosome"/>
</dbReference>
<dbReference type="GO" id="GO:0000428">
    <property type="term" value="C:DNA-directed RNA polymerase complex"/>
    <property type="evidence" value="ECO:0007669"/>
    <property type="project" value="UniProtKB-KW"/>
</dbReference>
<dbReference type="GO" id="GO:0003677">
    <property type="term" value="F:DNA binding"/>
    <property type="evidence" value="ECO:0007669"/>
    <property type="project" value="UniProtKB-UniRule"/>
</dbReference>
<dbReference type="GO" id="GO:0003899">
    <property type="term" value="F:DNA-directed RNA polymerase activity"/>
    <property type="evidence" value="ECO:0007669"/>
    <property type="project" value="UniProtKB-UniRule"/>
</dbReference>
<dbReference type="GO" id="GO:0032549">
    <property type="term" value="F:ribonucleoside binding"/>
    <property type="evidence" value="ECO:0007669"/>
    <property type="project" value="InterPro"/>
</dbReference>
<dbReference type="GO" id="GO:0006351">
    <property type="term" value="P:DNA-templated transcription"/>
    <property type="evidence" value="ECO:0007669"/>
    <property type="project" value="UniProtKB-UniRule"/>
</dbReference>
<dbReference type="CDD" id="cd00653">
    <property type="entry name" value="RNA_pol_B_RPB2"/>
    <property type="match status" value="1"/>
</dbReference>
<dbReference type="FunFam" id="2.40.50.100:FF:000006">
    <property type="entry name" value="DNA-directed RNA polymerase subunit beta"/>
    <property type="match status" value="1"/>
</dbReference>
<dbReference type="FunFam" id="2.40.50.150:FF:000001">
    <property type="entry name" value="DNA-directed RNA polymerase subunit beta"/>
    <property type="match status" value="1"/>
</dbReference>
<dbReference type="FunFam" id="3.90.1800.10:FF:000001">
    <property type="entry name" value="DNA-directed RNA polymerase subunit beta"/>
    <property type="match status" value="1"/>
</dbReference>
<dbReference type="Gene3D" id="2.40.50.100">
    <property type="match status" value="1"/>
</dbReference>
<dbReference type="Gene3D" id="2.40.50.150">
    <property type="match status" value="1"/>
</dbReference>
<dbReference type="Gene3D" id="3.90.1100.10">
    <property type="match status" value="2"/>
</dbReference>
<dbReference type="Gene3D" id="6.10.140.1670">
    <property type="match status" value="1"/>
</dbReference>
<dbReference type="Gene3D" id="2.30.150.10">
    <property type="entry name" value="DNA-directed RNA polymerase, beta subunit, external 1 domain"/>
    <property type="match status" value="1"/>
</dbReference>
<dbReference type="Gene3D" id="2.40.270.10">
    <property type="entry name" value="DNA-directed RNA polymerase, subunit 2, domain 6"/>
    <property type="match status" value="1"/>
</dbReference>
<dbReference type="Gene3D" id="3.90.1800.10">
    <property type="entry name" value="RNA polymerase alpha subunit dimerisation domain"/>
    <property type="match status" value="1"/>
</dbReference>
<dbReference type="Gene3D" id="3.90.1110.10">
    <property type="entry name" value="RNA polymerase Rpb2, domain 2"/>
    <property type="match status" value="1"/>
</dbReference>
<dbReference type="HAMAP" id="MF_01321">
    <property type="entry name" value="RNApol_bact_RpoB"/>
    <property type="match status" value="1"/>
</dbReference>
<dbReference type="InterPro" id="IPR042107">
    <property type="entry name" value="DNA-dir_RNA_pol_bsu_ext_1_sf"/>
</dbReference>
<dbReference type="InterPro" id="IPR019462">
    <property type="entry name" value="DNA-dir_RNA_pol_bsu_external_1"/>
</dbReference>
<dbReference type="InterPro" id="IPR015712">
    <property type="entry name" value="DNA-dir_RNA_pol_su2"/>
</dbReference>
<dbReference type="InterPro" id="IPR007120">
    <property type="entry name" value="DNA-dir_RNAP_su2_dom"/>
</dbReference>
<dbReference type="InterPro" id="IPR037033">
    <property type="entry name" value="DNA-dir_RNAP_su2_hyb_sf"/>
</dbReference>
<dbReference type="InterPro" id="IPR010243">
    <property type="entry name" value="RNA_pol_bsu_bac"/>
</dbReference>
<dbReference type="InterPro" id="IPR007121">
    <property type="entry name" value="RNA_pol_bsu_CS"/>
</dbReference>
<dbReference type="InterPro" id="IPR007644">
    <property type="entry name" value="RNA_pol_bsu_protrusion"/>
</dbReference>
<dbReference type="InterPro" id="IPR007642">
    <property type="entry name" value="RNA_pol_Rpb2_2"/>
</dbReference>
<dbReference type="InterPro" id="IPR037034">
    <property type="entry name" value="RNA_pol_Rpb2_2_sf"/>
</dbReference>
<dbReference type="InterPro" id="IPR007645">
    <property type="entry name" value="RNA_pol_Rpb2_3"/>
</dbReference>
<dbReference type="InterPro" id="IPR007641">
    <property type="entry name" value="RNA_pol_Rpb2_7"/>
</dbReference>
<dbReference type="InterPro" id="IPR014724">
    <property type="entry name" value="RNA_pol_RPB2_OB-fold"/>
</dbReference>
<dbReference type="NCBIfam" id="NF001616">
    <property type="entry name" value="PRK00405.1"/>
    <property type="match status" value="1"/>
</dbReference>
<dbReference type="NCBIfam" id="TIGR02013">
    <property type="entry name" value="rpoB"/>
    <property type="match status" value="1"/>
</dbReference>
<dbReference type="PANTHER" id="PTHR20856">
    <property type="entry name" value="DNA-DIRECTED RNA POLYMERASE I SUBUNIT 2"/>
    <property type="match status" value="1"/>
</dbReference>
<dbReference type="Pfam" id="PF04563">
    <property type="entry name" value="RNA_pol_Rpb2_1"/>
    <property type="match status" value="1"/>
</dbReference>
<dbReference type="Pfam" id="PF04561">
    <property type="entry name" value="RNA_pol_Rpb2_2"/>
    <property type="match status" value="3"/>
</dbReference>
<dbReference type="Pfam" id="PF04565">
    <property type="entry name" value="RNA_pol_Rpb2_3"/>
    <property type="match status" value="1"/>
</dbReference>
<dbReference type="Pfam" id="PF10385">
    <property type="entry name" value="RNA_pol_Rpb2_45"/>
    <property type="match status" value="1"/>
</dbReference>
<dbReference type="Pfam" id="PF00562">
    <property type="entry name" value="RNA_pol_Rpb2_6"/>
    <property type="match status" value="1"/>
</dbReference>
<dbReference type="Pfam" id="PF04560">
    <property type="entry name" value="RNA_pol_Rpb2_7"/>
    <property type="match status" value="1"/>
</dbReference>
<dbReference type="SUPFAM" id="SSF64484">
    <property type="entry name" value="beta and beta-prime subunits of DNA dependent RNA-polymerase"/>
    <property type="match status" value="1"/>
</dbReference>
<dbReference type="PROSITE" id="PS01166">
    <property type="entry name" value="RNA_POL_BETA"/>
    <property type="match status" value="1"/>
</dbReference>
<proteinExistence type="evidence at protein level"/>
<gene>
    <name evidence="1" type="primary">rpoB</name>
    <name type="ordered locus">PXO_04530</name>
</gene>
<organism>
    <name type="scientific">Xanthomonas oryzae pv. oryzae (strain PXO99A)</name>
    <dbReference type="NCBI Taxonomy" id="360094"/>
    <lineage>
        <taxon>Bacteria</taxon>
        <taxon>Pseudomonadati</taxon>
        <taxon>Pseudomonadota</taxon>
        <taxon>Gammaproteobacteria</taxon>
        <taxon>Lysobacterales</taxon>
        <taxon>Lysobacteraceae</taxon>
        <taxon>Xanthomonas</taxon>
    </lineage>
</organism>
<feature type="chain" id="PRO_1000141750" description="DNA-directed RNA polymerase subunit beta">
    <location>
        <begin position="1"/>
        <end position="1383"/>
    </location>
</feature>
<feature type="helix" evidence="2">
    <location>
        <begin position="6"/>
        <end position="10"/>
    </location>
</feature>
<feature type="helix" evidence="2">
    <location>
        <begin position="30"/>
        <end position="40"/>
    </location>
</feature>
<feature type="helix" evidence="2">
    <location>
        <begin position="54"/>
        <end position="61"/>
    </location>
</feature>
<feature type="strand" evidence="2">
    <location>
        <begin position="67"/>
        <end position="70"/>
    </location>
</feature>
<feature type="strand" evidence="2">
    <location>
        <begin position="72"/>
        <end position="80"/>
    </location>
</feature>
<feature type="helix" evidence="2">
    <location>
        <begin position="87"/>
        <end position="93"/>
    </location>
</feature>
<feature type="strand" evidence="2">
    <location>
        <begin position="98"/>
        <end position="109"/>
    </location>
</feature>
<feature type="strand" evidence="2">
    <location>
        <begin position="119"/>
        <end position="133"/>
    </location>
</feature>
<feature type="strand" evidence="2">
    <location>
        <begin position="137"/>
        <end position="139"/>
    </location>
</feature>
<feature type="strand" evidence="2">
    <location>
        <begin position="141"/>
        <end position="143"/>
    </location>
</feature>
<feature type="strand" evidence="2">
    <location>
        <begin position="146"/>
        <end position="150"/>
    </location>
</feature>
<feature type="strand" evidence="2">
    <location>
        <begin position="152"/>
        <end position="156"/>
    </location>
</feature>
<feature type="strand" evidence="2">
    <location>
        <begin position="158"/>
        <end position="169"/>
    </location>
</feature>
<feature type="strand" evidence="2">
    <location>
        <begin position="176"/>
        <end position="182"/>
    </location>
</feature>
<feature type="strand" evidence="2">
    <location>
        <begin position="184"/>
        <end position="186"/>
    </location>
</feature>
<feature type="strand" evidence="2">
    <location>
        <begin position="189"/>
        <end position="192"/>
    </location>
</feature>
<feature type="turn" evidence="2">
    <location>
        <begin position="195"/>
        <end position="197"/>
    </location>
</feature>
<feature type="strand" evidence="2">
    <location>
        <begin position="200"/>
        <end position="205"/>
    </location>
</feature>
<feature type="helix" evidence="2">
    <location>
        <begin position="211"/>
        <end position="218"/>
    </location>
</feature>
<feature type="helix" evidence="2">
    <location>
        <begin position="222"/>
        <end position="229"/>
    </location>
</feature>
<feature type="helix" evidence="2">
    <location>
        <begin position="251"/>
        <end position="253"/>
    </location>
</feature>
<feature type="helix" evidence="2">
    <location>
        <begin position="278"/>
        <end position="286"/>
    </location>
</feature>
<feature type="turn" evidence="2">
    <location>
        <begin position="295"/>
        <end position="300"/>
    </location>
</feature>
<feature type="turn" evidence="2">
    <location>
        <begin position="310"/>
        <end position="312"/>
    </location>
</feature>
<feature type="strand" evidence="2">
    <location>
        <begin position="314"/>
        <end position="317"/>
    </location>
</feature>
<feature type="helix" evidence="2">
    <location>
        <begin position="325"/>
        <end position="334"/>
    </location>
</feature>
<feature type="strand" evidence="2">
    <location>
        <begin position="346"/>
        <end position="348"/>
    </location>
</feature>
<feature type="helix" evidence="2">
    <location>
        <begin position="352"/>
        <end position="359"/>
    </location>
</feature>
<feature type="helix" evidence="2">
    <location>
        <begin position="365"/>
        <end position="376"/>
    </location>
</feature>
<feature type="helix" evidence="2">
    <location>
        <begin position="384"/>
        <end position="395"/>
    </location>
</feature>
<feature type="turn" evidence="2">
    <location>
        <begin position="398"/>
        <end position="401"/>
    </location>
</feature>
<feature type="helix" evidence="2">
    <location>
        <begin position="405"/>
        <end position="415"/>
    </location>
</feature>
<feature type="turn" evidence="2">
    <location>
        <begin position="429"/>
        <end position="433"/>
    </location>
</feature>
<feature type="helix" evidence="2">
    <location>
        <begin position="438"/>
        <end position="447"/>
    </location>
</feature>
<feature type="helix" evidence="2">
    <location>
        <begin position="452"/>
        <end position="465"/>
    </location>
</feature>
<feature type="turn" evidence="2">
    <location>
        <begin position="476"/>
        <end position="478"/>
    </location>
</feature>
<feature type="strand" evidence="2">
    <location>
        <begin position="479"/>
        <end position="482"/>
    </location>
</feature>
<feature type="helix" evidence="2">
    <location>
        <begin position="484"/>
        <end position="506"/>
    </location>
</feature>
<feature type="helix" evidence="2">
    <location>
        <begin position="517"/>
        <end position="519"/>
    </location>
</feature>
<feature type="helix" evidence="2">
    <location>
        <begin position="523"/>
        <end position="535"/>
    </location>
</feature>
<feature type="strand" evidence="2">
    <location>
        <begin position="538"/>
        <end position="542"/>
    </location>
</feature>
<feature type="helix" evidence="2">
    <location>
        <begin position="548"/>
        <end position="555"/>
    </location>
</feature>
<feature type="strand" evidence="2">
    <location>
        <begin position="556"/>
        <end position="560"/>
    </location>
</feature>
<feature type="strand" evidence="2">
    <location>
        <begin position="562"/>
        <end position="565"/>
    </location>
</feature>
<feature type="strand" evidence="2">
    <location>
        <begin position="568"/>
        <end position="570"/>
    </location>
</feature>
<feature type="helix" evidence="2">
    <location>
        <begin position="573"/>
        <end position="576"/>
    </location>
</feature>
<feature type="helix" evidence="2">
    <location>
        <begin position="580"/>
        <end position="582"/>
    </location>
</feature>
<feature type="turn" evidence="2">
    <location>
        <begin position="583"/>
        <end position="585"/>
    </location>
</feature>
<feature type="strand" evidence="2">
    <location>
        <begin position="586"/>
        <end position="589"/>
    </location>
</feature>
<feature type="strand" evidence="2">
    <location>
        <begin position="593"/>
        <end position="595"/>
    </location>
</feature>
<feature type="strand" evidence="2">
    <location>
        <begin position="597"/>
        <end position="600"/>
    </location>
</feature>
<feature type="strand" evidence="2">
    <location>
        <begin position="611"/>
        <end position="613"/>
    </location>
</feature>
<feature type="strand" evidence="2">
    <location>
        <begin position="615"/>
        <end position="622"/>
    </location>
</feature>
<feature type="strand" evidence="2">
    <location>
        <begin position="624"/>
        <end position="635"/>
    </location>
</feature>
<feature type="turn" evidence="2">
    <location>
        <begin position="636"/>
        <end position="641"/>
    </location>
</feature>
<feature type="strand" evidence="2">
    <location>
        <begin position="652"/>
        <end position="655"/>
    </location>
</feature>
<feature type="strand" evidence="2">
    <location>
        <begin position="660"/>
        <end position="673"/>
    </location>
</feature>
<feature type="helix" evidence="2">
    <location>
        <begin position="685"/>
        <end position="687"/>
    </location>
</feature>
<feature type="turn" evidence="2">
    <location>
        <begin position="691"/>
        <end position="693"/>
    </location>
</feature>
<feature type="strand" evidence="2">
    <location>
        <begin position="694"/>
        <end position="697"/>
    </location>
</feature>
<feature type="helix" evidence="2">
    <location>
        <begin position="699"/>
        <end position="701"/>
    </location>
</feature>
<feature type="helix" evidence="2">
    <location>
        <begin position="704"/>
        <end position="713"/>
    </location>
</feature>
<feature type="helix" evidence="2">
    <location>
        <begin position="714"/>
        <end position="716"/>
    </location>
</feature>
<feature type="strand" evidence="2">
    <location>
        <begin position="727"/>
        <end position="729"/>
    </location>
</feature>
<feature type="helix" evidence="2">
    <location>
        <begin position="733"/>
        <end position="740"/>
    </location>
</feature>
<feature type="strand" evidence="2">
    <location>
        <begin position="742"/>
        <end position="745"/>
    </location>
</feature>
<feature type="strand" evidence="2">
    <location>
        <begin position="750"/>
        <end position="755"/>
    </location>
</feature>
<feature type="strand" evidence="2">
    <location>
        <begin position="757"/>
        <end position="764"/>
    </location>
</feature>
<feature type="turn" evidence="2">
    <location>
        <begin position="766"/>
        <end position="768"/>
    </location>
</feature>
<feature type="strand" evidence="2">
    <location>
        <begin position="779"/>
        <end position="781"/>
    </location>
</feature>
<feature type="strand" evidence="2">
    <location>
        <begin position="785"/>
        <end position="787"/>
    </location>
</feature>
<feature type="strand" evidence="2">
    <location>
        <begin position="811"/>
        <end position="814"/>
    </location>
</feature>
<feature type="strand" evidence="2">
    <location>
        <begin position="820"/>
        <end position="823"/>
    </location>
</feature>
<feature type="strand" evidence="2">
    <location>
        <begin position="826"/>
        <end position="834"/>
    </location>
</feature>
<feature type="turn" evidence="2">
    <location>
        <begin position="837"/>
        <end position="840"/>
    </location>
</feature>
<feature type="strand" evidence="2">
    <location>
        <begin position="841"/>
        <end position="847"/>
    </location>
</feature>
<feature type="helix" evidence="2">
    <location>
        <begin position="850"/>
        <end position="853"/>
    </location>
</feature>
<feature type="strand" evidence="2">
    <location>
        <begin position="859"/>
        <end position="871"/>
    </location>
</feature>
<feature type="helix" evidence="2">
    <location>
        <begin position="888"/>
        <end position="890"/>
    </location>
</feature>
<feature type="strand" evidence="2">
    <location>
        <begin position="892"/>
        <end position="894"/>
    </location>
</feature>
<feature type="strand" evidence="2">
    <location>
        <begin position="898"/>
        <end position="900"/>
    </location>
</feature>
<feature type="strand" evidence="2">
    <location>
        <begin position="911"/>
        <end position="913"/>
    </location>
</feature>
<feature type="helix" evidence="2">
    <location>
        <begin position="926"/>
        <end position="934"/>
    </location>
</feature>
<feature type="strand" evidence="2">
    <location>
        <begin position="956"/>
        <end position="964"/>
    </location>
</feature>
<feature type="helix" evidence="2">
    <location>
        <begin position="972"/>
        <end position="1007"/>
    </location>
</feature>
<feature type="helix" evidence="2">
    <location>
        <begin position="1054"/>
        <end position="1077"/>
    </location>
</feature>
<feature type="strand" evidence="2">
    <location>
        <begin position="1087"/>
        <end position="1099"/>
    </location>
</feature>
<feature type="strand" evidence="2">
    <location>
        <begin position="1110"/>
        <end position="1112"/>
    </location>
</feature>
<feature type="strand" evidence="2">
    <location>
        <begin position="1116"/>
        <end position="1120"/>
    </location>
</feature>
<feature type="helix" evidence="2">
    <location>
        <begin position="1123"/>
        <end position="1125"/>
    </location>
</feature>
<feature type="strand" evidence="2">
    <location>
        <begin position="1136"/>
        <end position="1139"/>
    </location>
</feature>
<feature type="helix" evidence="2">
    <location>
        <begin position="1143"/>
        <end position="1147"/>
    </location>
</feature>
<feature type="helix" evidence="2">
    <location>
        <begin position="1151"/>
        <end position="1174"/>
    </location>
</feature>
<feature type="helix" evidence="2">
    <location>
        <begin position="1179"/>
        <end position="1190"/>
    </location>
</feature>
<feature type="strand" evidence="2">
    <location>
        <begin position="1203"/>
        <end position="1206"/>
    </location>
</feature>
<feature type="helix" evidence="2">
    <location>
        <begin position="1209"/>
        <end position="1217"/>
    </location>
</feature>
<feature type="strand" evidence="2">
    <location>
        <begin position="1228"/>
        <end position="1230"/>
    </location>
</feature>
<feature type="helix" evidence="2">
    <location>
        <begin position="1234"/>
        <end position="1243"/>
    </location>
</feature>
<feature type="strand" evidence="2">
    <location>
        <begin position="1248"/>
        <end position="1252"/>
    </location>
</feature>
<feature type="turn" evidence="2">
    <location>
        <begin position="1257"/>
        <end position="1259"/>
    </location>
</feature>
<feature type="strand" evidence="2">
    <location>
        <begin position="1267"/>
        <end position="1274"/>
    </location>
</feature>
<feature type="helix" evidence="2">
    <location>
        <begin position="1281"/>
        <end position="1284"/>
    </location>
</feature>
<feature type="strand" evidence="2">
    <location>
        <begin position="1286"/>
        <end position="1290"/>
    </location>
</feature>
<feature type="strand" evidence="2">
    <location>
        <begin position="1295"/>
        <end position="1298"/>
    </location>
</feature>
<feature type="helix" evidence="2">
    <location>
        <begin position="1305"/>
        <end position="1307"/>
    </location>
</feature>
<feature type="strand" evidence="2">
    <location>
        <begin position="1310"/>
        <end position="1312"/>
    </location>
</feature>
<feature type="helix" evidence="2">
    <location>
        <begin position="1314"/>
        <end position="1322"/>
    </location>
</feature>
<feature type="helix" evidence="2">
    <location>
        <begin position="1326"/>
        <end position="1333"/>
    </location>
</feature>
<feature type="turn" evidence="2">
    <location>
        <begin position="1334"/>
        <end position="1338"/>
    </location>
</feature>
<feature type="helix" evidence="2">
    <location>
        <begin position="1340"/>
        <end position="1352"/>
    </location>
</feature>
<feature type="helix" evidence="2">
    <location>
        <begin position="1363"/>
        <end position="1373"/>
    </location>
</feature>
<feature type="turn" evidence="2">
    <location>
        <begin position="1374"/>
        <end position="1376"/>
    </location>
</feature>
<feature type="strand" evidence="2">
    <location>
        <begin position="1377"/>
        <end position="1381"/>
    </location>
</feature>
<sequence length="1383" mass="154272">MTSYSFTEKKRIRKDFGKQRSILEVPFLLAIQVDSYREFLQEDVESTKRKDLGLHAALKSVFPISSYSGNAALEYVGYKLGQPVFDERECRQRGMSYGAPLRVTVRLVIYDRESSTKAIKYVKEQEVYLGEIPLMTGNGTFIVNGTERVIVSQLHRSPGVFFDHDRGKTHSSGKLLYSARIIPYRGSWLDFEFDPKDALFTRIDRRRKLPVSILLRALGYNNEEMLAEFFEINTFHINPDEGVQLELVPERLRGETLNFDLADGDKVIVEAGKRITARHVKQLEAAGVAALAVPDDYLVGRILSHDVVDGSTGELLANANDEISEDQLTAFRKAGVDAVGTLWVNDLDRGPYLSNTLRIDPTKTQLEALVEIYRMMRPGEPPTKEAAQNLFHNLFFTFERYDLSTVGRMKFNRRVGRKDVLGESVLYDKKYFAERNDEESKRLVAEHTDTSDILEVIKVLTEIRNGRGVVDDIDHLGNRRVRSVGEMAENVFRVGLVRVERAVKERLSMAESEGLTPQELINAKPVAAAIKEFFGSSQLSQFMDQNNPLSEVTHKRRVSALGPGGLTRERAGFEVRDVHPTHYGRVCTIETPEGPNIGLINSLAVFARTNQYGFLETPYRKVLDGKVSDDVEYLSAIEENEYVIAQANALTDAKNMLTEQFVPCRFQGESLLKPPSEVHFMDVSPMQTVSVAAALVPFLEHDDANRALMGANMQRQAVPTLRSQKPLVGTGIERAVARDSGVTVNALRGGVIEQIDAARIVVKVNEAEIGGGTDAGVDIYNLIKYTRSNQNTCINQRPLVNVGDVIARGDVLADGPSTDIGELALGQNMLIAFMPWNGYNFEDSILLSERVVEEDRYTTIHIEELTCVARDTKLGPEEISADIPNVSEQALNRLDESGVVYIGAEVRAGDIMVGKVTPKGESQLTPEEKLLRAIFGEKASDVKDSSLRVPPGMDGTVIDVQVFTRDGIEKDKRARQIEENEIKRVKKDFDDQFRILEAAIYARLRSQIVGKVANGGANLKKGDSVTDAYLDGLKKSDWFQLRMKDEDAADAIERAQKQIQAHEKEFEARFADKRGKITQGDDLAPGVLKMVKVFLAVKRRIQPGDKMAGRHGNKGVVSNVVPVEDMPYMATGESVDIVLNPLGVPSRMNIGQILEVHLGWAAKGLGRKIQRMLEAQAAVSELRKFLDDIYNHDNAINAQRVDLSQFSDEELLNLGKNLIDGVPMATPVFDGASEAEIKRMLELADLPQSGQTQLYDGRTGEAFDRKTTVGYMHYLKLNHLVDDKMHARSTGPYSLVTQQPLGGKAQFGGQRFGEMEVWALEAYGAAYTLQEMLTVKSDDVQGRNQMYKNIVDGEHEMVAGMPESFNVLVKEIRSLAIHMELEE</sequence>